<gene>
    <name evidence="1" type="primary">priB</name>
    <name type="ordered locus">ECS88_4787</name>
</gene>
<name>PRIB_ECO45</name>
<evidence type="ECO:0000255" key="1">
    <source>
        <dbReference type="HAMAP-Rule" id="MF_00720"/>
    </source>
</evidence>
<proteinExistence type="inferred from homology"/>
<accession>B7MLK6</accession>
<comment type="function">
    <text evidence="1">Involved in the restart of stalled replication forks, which reloads the replicative helicase on sites other than the origin of replication; the PriA-PriB pathway is the major replication restart pathway. During primosome assembly it facilitates complex formation between PriA and DnaT on DNA; stabilizes PriA on DNA. Stimulates the DNA unwinding activity of PriA helicase.</text>
</comment>
<comment type="subunit">
    <text evidence="1">Homodimer. Interacts with PriA and DnaT. Component of the replication restart primosome. Primosome assembly occurs via a 'hand-off' mechanism. PriA binds to replication forks, subsequently PriB then DnaT bind; DnaT then displaces ssDNA to generate the helicase loading substrate.</text>
</comment>
<comment type="similarity">
    <text evidence="1">Belongs to the PriB family.</text>
</comment>
<protein>
    <recommendedName>
        <fullName evidence="1">Replication restart protein PriB</fullName>
    </recommendedName>
</protein>
<feature type="chain" id="PRO_1000132618" description="Replication restart protein PriB">
    <location>
        <begin position="1"/>
        <end position="104"/>
    </location>
</feature>
<feature type="domain" description="SSB" evidence="1">
    <location>
        <begin position="1"/>
        <end position="101"/>
    </location>
</feature>
<reference key="1">
    <citation type="journal article" date="2009" name="PLoS Genet.">
        <title>Organised genome dynamics in the Escherichia coli species results in highly diverse adaptive paths.</title>
        <authorList>
            <person name="Touchon M."/>
            <person name="Hoede C."/>
            <person name="Tenaillon O."/>
            <person name="Barbe V."/>
            <person name="Baeriswyl S."/>
            <person name="Bidet P."/>
            <person name="Bingen E."/>
            <person name="Bonacorsi S."/>
            <person name="Bouchier C."/>
            <person name="Bouvet O."/>
            <person name="Calteau A."/>
            <person name="Chiapello H."/>
            <person name="Clermont O."/>
            <person name="Cruveiller S."/>
            <person name="Danchin A."/>
            <person name="Diard M."/>
            <person name="Dossat C."/>
            <person name="Karoui M.E."/>
            <person name="Frapy E."/>
            <person name="Garry L."/>
            <person name="Ghigo J.M."/>
            <person name="Gilles A.M."/>
            <person name="Johnson J."/>
            <person name="Le Bouguenec C."/>
            <person name="Lescat M."/>
            <person name="Mangenot S."/>
            <person name="Martinez-Jehanne V."/>
            <person name="Matic I."/>
            <person name="Nassif X."/>
            <person name="Oztas S."/>
            <person name="Petit M.A."/>
            <person name="Pichon C."/>
            <person name="Rouy Z."/>
            <person name="Ruf C.S."/>
            <person name="Schneider D."/>
            <person name="Tourret J."/>
            <person name="Vacherie B."/>
            <person name="Vallenet D."/>
            <person name="Medigue C."/>
            <person name="Rocha E.P.C."/>
            <person name="Denamur E."/>
        </authorList>
    </citation>
    <scope>NUCLEOTIDE SEQUENCE [LARGE SCALE GENOMIC DNA]</scope>
    <source>
        <strain>S88 / ExPEC</strain>
    </source>
</reference>
<organism>
    <name type="scientific">Escherichia coli O45:K1 (strain S88 / ExPEC)</name>
    <dbReference type="NCBI Taxonomy" id="585035"/>
    <lineage>
        <taxon>Bacteria</taxon>
        <taxon>Pseudomonadati</taxon>
        <taxon>Pseudomonadota</taxon>
        <taxon>Gammaproteobacteria</taxon>
        <taxon>Enterobacterales</taxon>
        <taxon>Enterobacteriaceae</taxon>
        <taxon>Escherichia</taxon>
    </lineage>
</organism>
<dbReference type="EMBL" id="CU928161">
    <property type="protein sequence ID" value="CAR05936.1"/>
    <property type="molecule type" value="Genomic_DNA"/>
</dbReference>
<dbReference type="RefSeq" id="WP_001296681.1">
    <property type="nucleotide sequence ID" value="NC_011742.1"/>
</dbReference>
<dbReference type="SMR" id="B7MLK6"/>
<dbReference type="GeneID" id="93777622"/>
<dbReference type="KEGG" id="ecz:ECS88_4787"/>
<dbReference type="HOGENOM" id="CLU_166075_0_0_6"/>
<dbReference type="Proteomes" id="UP000000747">
    <property type="component" value="Chromosome"/>
</dbReference>
<dbReference type="GO" id="GO:1990077">
    <property type="term" value="C:primosome complex"/>
    <property type="evidence" value="ECO:0007669"/>
    <property type="project" value="UniProtKB-KW"/>
</dbReference>
<dbReference type="GO" id="GO:0003697">
    <property type="term" value="F:single-stranded DNA binding"/>
    <property type="evidence" value="ECO:0007669"/>
    <property type="project" value="UniProtKB-UniRule"/>
</dbReference>
<dbReference type="GO" id="GO:0006269">
    <property type="term" value="P:DNA replication, synthesis of primer"/>
    <property type="evidence" value="ECO:0007669"/>
    <property type="project" value="UniProtKB-KW"/>
</dbReference>
<dbReference type="CDD" id="cd04496">
    <property type="entry name" value="SSB_OBF"/>
    <property type="match status" value="1"/>
</dbReference>
<dbReference type="FunFam" id="2.40.50.140:FF:000077">
    <property type="entry name" value="Primosomal replication protein N"/>
    <property type="match status" value="1"/>
</dbReference>
<dbReference type="Gene3D" id="2.40.50.140">
    <property type="entry name" value="Nucleic acid-binding proteins"/>
    <property type="match status" value="1"/>
</dbReference>
<dbReference type="HAMAP" id="MF_00720">
    <property type="entry name" value="PriB"/>
    <property type="match status" value="1"/>
</dbReference>
<dbReference type="InterPro" id="IPR012340">
    <property type="entry name" value="NA-bd_OB-fold"/>
</dbReference>
<dbReference type="InterPro" id="IPR000424">
    <property type="entry name" value="Primosome_PriB/ssb"/>
</dbReference>
<dbReference type="InterPro" id="IPR023646">
    <property type="entry name" value="Prisomal_replication_PriB"/>
</dbReference>
<dbReference type="NCBIfam" id="TIGR04418">
    <property type="entry name" value="PriB_gamma"/>
    <property type="match status" value="1"/>
</dbReference>
<dbReference type="Pfam" id="PF22657">
    <property type="entry name" value="SSB_1"/>
    <property type="match status" value="1"/>
</dbReference>
<dbReference type="PIRSF" id="PIRSF003135">
    <property type="entry name" value="Primosomal_n"/>
    <property type="match status" value="1"/>
</dbReference>
<dbReference type="SUPFAM" id="SSF50249">
    <property type="entry name" value="Nucleic acid-binding proteins"/>
    <property type="match status" value="1"/>
</dbReference>
<dbReference type="PROSITE" id="PS50935">
    <property type="entry name" value="SSB"/>
    <property type="match status" value="1"/>
</dbReference>
<sequence>MTNRLVLSGTVCRTPLRKVSPSGIPHCQFVLEHRSVQEEAGFHRQAWCQMPVIVSGHENQAITHSITVGSRITVQGFISCHKAKNGLSKMVLHAEQIELIDSGD</sequence>
<keyword id="KW-0235">DNA replication</keyword>
<keyword id="KW-0238">DNA-binding</keyword>
<keyword id="KW-0639">Primosome</keyword>
<keyword id="KW-1185">Reference proteome</keyword>